<reference key="1">
    <citation type="submission" date="2007-12" db="EMBL/GenBank/DDBJ databases">
        <title>Brucella suis ATCC 23445 whole genome shotgun sequencing project.</title>
        <authorList>
            <person name="Setubal J.C."/>
            <person name="Bowns C."/>
            <person name="Boyle S."/>
            <person name="Crasta O.R."/>
            <person name="Czar M.J."/>
            <person name="Dharmanolla C."/>
            <person name="Gillespie J.J."/>
            <person name="Kenyon R.W."/>
            <person name="Lu J."/>
            <person name="Mane S."/>
            <person name="Mohapatra S."/>
            <person name="Nagrani S."/>
            <person name="Purkayastha A."/>
            <person name="Rajasimha H.K."/>
            <person name="Shallom J.M."/>
            <person name="Shallom S."/>
            <person name="Shukla M."/>
            <person name="Snyder E.E."/>
            <person name="Sobral B.W."/>
            <person name="Wattam A.R."/>
            <person name="Will R."/>
            <person name="Williams K."/>
            <person name="Yoo H."/>
            <person name="Bruce D."/>
            <person name="Detter C."/>
            <person name="Munk C."/>
            <person name="Brettin T.S."/>
        </authorList>
    </citation>
    <scope>NUCLEOTIDE SEQUENCE [LARGE SCALE GENOMIC DNA]</scope>
    <source>
        <strain>ATCC 23445 / NCTC 10510</strain>
    </source>
</reference>
<keyword id="KW-0067">ATP-binding</keyword>
<keyword id="KW-0093">Biotin biosynthesis</keyword>
<keyword id="KW-0963">Cytoplasm</keyword>
<keyword id="KW-0436">Ligase</keyword>
<keyword id="KW-0460">Magnesium</keyword>
<keyword id="KW-0479">Metal-binding</keyword>
<keyword id="KW-0547">Nucleotide-binding</keyword>
<protein>
    <recommendedName>
        <fullName evidence="1">ATP-dependent dethiobiotin synthetase BioD</fullName>
        <ecNumber evidence="1">6.3.3.3</ecNumber>
    </recommendedName>
    <alternativeName>
        <fullName evidence="1">DTB synthetase</fullName>
        <shortName evidence="1">DTBS</shortName>
    </alternativeName>
    <alternativeName>
        <fullName evidence="1">Dethiobiotin synthase</fullName>
    </alternativeName>
</protein>
<dbReference type="EC" id="6.3.3.3" evidence="1"/>
<dbReference type="EMBL" id="CP000912">
    <property type="protein sequence ID" value="ABY39486.1"/>
    <property type="molecule type" value="Genomic_DNA"/>
</dbReference>
<dbReference type="RefSeq" id="WP_004688969.1">
    <property type="nucleotide sequence ID" value="NC_010167.1"/>
</dbReference>
<dbReference type="SMR" id="A9WYH0"/>
<dbReference type="GeneID" id="97535376"/>
<dbReference type="KEGG" id="bmt:BSUIS_B0490"/>
<dbReference type="HOGENOM" id="CLU_072551_2_0_5"/>
<dbReference type="UniPathway" id="UPA00078">
    <property type="reaction ID" value="UER00161"/>
</dbReference>
<dbReference type="Proteomes" id="UP000008545">
    <property type="component" value="Chromosome II"/>
</dbReference>
<dbReference type="GO" id="GO:0005829">
    <property type="term" value="C:cytosol"/>
    <property type="evidence" value="ECO:0007669"/>
    <property type="project" value="TreeGrafter"/>
</dbReference>
<dbReference type="GO" id="GO:0005524">
    <property type="term" value="F:ATP binding"/>
    <property type="evidence" value="ECO:0007669"/>
    <property type="project" value="UniProtKB-UniRule"/>
</dbReference>
<dbReference type="GO" id="GO:0004141">
    <property type="term" value="F:dethiobiotin synthase activity"/>
    <property type="evidence" value="ECO:0007669"/>
    <property type="project" value="UniProtKB-UniRule"/>
</dbReference>
<dbReference type="GO" id="GO:0000287">
    <property type="term" value="F:magnesium ion binding"/>
    <property type="evidence" value="ECO:0007669"/>
    <property type="project" value="UniProtKB-UniRule"/>
</dbReference>
<dbReference type="GO" id="GO:0009102">
    <property type="term" value="P:biotin biosynthetic process"/>
    <property type="evidence" value="ECO:0007669"/>
    <property type="project" value="UniProtKB-UniRule"/>
</dbReference>
<dbReference type="CDD" id="cd03109">
    <property type="entry name" value="DTBS"/>
    <property type="match status" value="1"/>
</dbReference>
<dbReference type="Gene3D" id="3.40.50.300">
    <property type="entry name" value="P-loop containing nucleotide triphosphate hydrolases"/>
    <property type="match status" value="1"/>
</dbReference>
<dbReference type="HAMAP" id="MF_00336">
    <property type="entry name" value="BioD"/>
    <property type="match status" value="1"/>
</dbReference>
<dbReference type="InterPro" id="IPR004472">
    <property type="entry name" value="DTB_synth_BioD"/>
</dbReference>
<dbReference type="InterPro" id="IPR027417">
    <property type="entry name" value="P-loop_NTPase"/>
</dbReference>
<dbReference type="NCBIfam" id="TIGR00347">
    <property type="entry name" value="bioD"/>
    <property type="match status" value="1"/>
</dbReference>
<dbReference type="PANTHER" id="PTHR43210:SF2">
    <property type="entry name" value="ATP-DEPENDENT DETHIOBIOTIN SYNTHETASE BIOD 2"/>
    <property type="match status" value="1"/>
</dbReference>
<dbReference type="PANTHER" id="PTHR43210">
    <property type="entry name" value="DETHIOBIOTIN SYNTHETASE"/>
    <property type="match status" value="1"/>
</dbReference>
<dbReference type="Pfam" id="PF13500">
    <property type="entry name" value="AAA_26"/>
    <property type="match status" value="1"/>
</dbReference>
<dbReference type="PIRSF" id="PIRSF006755">
    <property type="entry name" value="DTB_synth"/>
    <property type="match status" value="1"/>
</dbReference>
<dbReference type="SUPFAM" id="SSF52540">
    <property type="entry name" value="P-loop containing nucleoside triphosphate hydrolases"/>
    <property type="match status" value="1"/>
</dbReference>
<gene>
    <name evidence="1" type="primary">bioD</name>
    <name type="ordered locus">BSUIS_B0490</name>
</gene>
<evidence type="ECO:0000255" key="1">
    <source>
        <dbReference type="HAMAP-Rule" id="MF_00336"/>
    </source>
</evidence>
<proteinExistence type="inferred from homology"/>
<accession>A9WYH0</accession>
<sequence>MNSRLIVTGTDTGIGKTVFSAALCHALGAAYWKPVQSGLEEETDSEIVARLAQASPQRILPEAWRLNTPASPHLSARLDGVEIRPEEMHIPATSLPLVIEGAGGLLVPLNDKTLFADLFAIWRIPAILCARAALGTINHTLLSLEAMRSRDIPVLGVAFIGEANEDTETTIAHLGRVKRLGRLPLLDDLSPEKLHHSFARNFHIDDFAGVAR</sequence>
<feature type="chain" id="PRO_1000079270" description="ATP-dependent dethiobiotin synthetase BioD">
    <location>
        <begin position="1"/>
        <end position="212"/>
    </location>
</feature>
<feature type="active site" evidence="1">
    <location>
        <position position="33"/>
    </location>
</feature>
<feature type="binding site" evidence="1">
    <location>
        <begin position="13"/>
        <end position="18"/>
    </location>
    <ligand>
        <name>ATP</name>
        <dbReference type="ChEBI" id="CHEBI:30616"/>
    </ligand>
</feature>
<feature type="binding site" evidence="1">
    <location>
        <position position="17"/>
    </location>
    <ligand>
        <name>Mg(2+)</name>
        <dbReference type="ChEBI" id="CHEBI:18420"/>
    </ligand>
</feature>
<feature type="binding site" evidence="1">
    <location>
        <position position="37"/>
    </location>
    <ligand>
        <name>substrate</name>
    </ligand>
</feature>
<feature type="binding site" evidence="1">
    <location>
        <begin position="100"/>
        <end position="103"/>
    </location>
    <ligand>
        <name>ATP</name>
        <dbReference type="ChEBI" id="CHEBI:30616"/>
    </ligand>
</feature>
<feature type="binding site" evidence="1">
    <location>
        <position position="100"/>
    </location>
    <ligand>
        <name>Mg(2+)</name>
        <dbReference type="ChEBI" id="CHEBI:18420"/>
    </ligand>
</feature>
<feature type="binding site" evidence="1">
    <location>
        <begin position="184"/>
        <end position="186"/>
    </location>
    <ligand>
        <name>ATP</name>
        <dbReference type="ChEBI" id="CHEBI:30616"/>
    </ligand>
</feature>
<name>BIOD_BRUSI</name>
<organism>
    <name type="scientific">Brucella suis (strain ATCC 23445 / NCTC 10510)</name>
    <dbReference type="NCBI Taxonomy" id="470137"/>
    <lineage>
        <taxon>Bacteria</taxon>
        <taxon>Pseudomonadati</taxon>
        <taxon>Pseudomonadota</taxon>
        <taxon>Alphaproteobacteria</taxon>
        <taxon>Hyphomicrobiales</taxon>
        <taxon>Brucellaceae</taxon>
        <taxon>Brucella/Ochrobactrum group</taxon>
        <taxon>Brucella</taxon>
    </lineage>
</organism>
<comment type="function">
    <text evidence="1">Catalyzes a mechanistically unusual reaction, the ATP-dependent insertion of CO2 between the N7 and N8 nitrogen atoms of 7,8-diaminopelargonic acid (DAPA, also called 7,8-diammoniononanoate) to form a ureido ring.</text>
</comment>
<comment type="catalytic activity">
    <reaction evidence="1">
        <text>(7R,8S)-7,8-diammoniononanoate + CO2 + ATP = (4R,5S)-dethiobiotin + ADP + phosphate + 3 H(+)</text>
        <dbReference type="Rhea" id="RHEA:15805"/>
        <dbReference type="ChEBI" id="CHEBI:15378"/>
        <dbReference type="ChEBI" id="CHEBI:16526"/>
        <dbReference type="ChEBI" id="CHEBI:30616"/>
        <dbReference type="ChEBI" id="CHEBI:43474"/>
        <dbReference type="ChEBI" id="CHEBI:149469"/>
        <dbReference type="ChEBI" id="CHEBI:149473"/>
        <dbReference type="ChEBI" id="CHEBI:456216"/>
        <dbReference type="EC" id="6.3.3.3"/>
    </reaction>
</comment>
<comment type="cofactor">
    <cofactor evidence="1">
        <name>Mg(2+)</name>
        <dbReference type="ChEBI" id="CHEBI:18420"/>
    </cofactor>
</comment>
<comment type="pathway">
    <text evidence="1">Cofactor biosynthesis; biotin biosynthesis; biotin from 7,8-diaminononanoate: step 1/2.</text>
</comment>
<comment type="subunit">
    <text evidence="1">Homodimer.</text>
</comment>
<comment type="subcellular location">
    <subcellularLocation>
        <location evidence="1">Cytoplasm</location>
    </subcellularLocation>
</comment>
<comment type="similarity">
    <text evidence="1">Belongs to the dethiobiotin synthetase family.</text>
</comment>